<dbReference type="EMBL" id="CP000626">
    <property type="protein sequence ID" value="ABQ18979.1"/>
    <property type="molecule type" value="Genomic_DNA"/>
</dbReference>
<dbReference type="EMBL" id="CP001236">
    <property type="protein sequence ID" value="ACP11408.1"/>
    <property type="molecule type" value="Genomic_DNA"/>
</dbReference>
<dbReference type="RefSeq" id="WP_001025632.1">
    <property type="nucleotide sequence ID" value="NZ_JAACZH010000025.1"/>
</dbReference>
<dbReference type="SMR" id="A5EZS7"/>
<dbReference type="KEGG" id="vco:VC0395_0676"/>
<dbReference type="KEGG" id="vcr:VC395_A0574"/>
<dbReference type="PATRIC" id="fig|345073.21.peg.3316"/>
<dbReference type="eggNOG" id="COG3132">
    <property type="taxonomic scope" value="Bacteria"/>
</dbReference>
<dbReference type="HOGENOM" id="CLU_057831_2_0_6"/>
<dbReference type="OrthoDB" id="9784785at2"/>
<dbReference type="Proteomes" id="UP000000249">
    <property type="component" value="Chromosome 1"/>
</dbReference>
<dbReference type="Gene3D" id="1.10.10.10">
    <property type="entry name" value="Winged helix-like DNA-binding domain superfamily/Winged helix DNA-binding domain"/>
    <property type="match status" value="2"/>
</dbReference>
<dbReference type="HAMAP" id="MF_01584">
    <property type="entry name" value="UPF0502"/>
    <property type="match status" value="1"/>
</dbReference>
<dbReference type="InterPro" id="IPR007432">
    <property type="entry name" value="DUF480"/>
</dbReference>
<dbReference type="InterPro" id="IPR036388">
    <property type="entry name" value="WH-like_DNA-bd_sf"/>
</dbReference>
<dbReference type="InterPro" id="IPR036390">
    <property type="entry name" value="WH_DNA-bd_sf"/>
</dbReference>
<dbReference type="PANTHER" id="PTHR38768">
    <property type="entry name" value="UPF0502 PROTEIN YCEH"/>
    <property type="match status" value="1"/>
</dbReference>
<dbReference type="PANTHER" id="PTHR38768:SF1">
    <property type="entry name" value="UPF0502 PROTEIN YCEH"/>
    <property type="match status" value="1"/>
</dbReference>
<dbReference type="Pfam" id="PF04337">
    <property type="entry name" value="DUF480"/>
    <property type="match status" value="1"/>
</dbReference>
<dbReference type="SUPFAM" id="SSF46785">
    <property type="entry name" value="Winged helix' DNA-binding domain"/>
    <property type="match status" value="2"/>
</dbReference>
<accession>A5EZS7</accession>
<accession>C3M5J5</accession>
<comment type="similarity">
    <text evidence="1">Belongs to the UPF0502 family.</text>
</comment>
<reference key="1">
    <citation type="submission" date="2007-03" db="EMBL/GenBank/DDBJ databases">
        <authorList>
            <person name="Heidelberg J."/>
        </authorList>
    </citation>
    <scope>NUCLEOTIDE SEQUENCE [LARGE SCALE GENOMIC DNA]</scope>
    <source>
        <strain>ATCC 39541 / Classical Ogawa 395 / O395</strain>
    </source>
</reference>
<reference key="2">
    <citation type="journal article" date="2008" name="PLoS ONE">
        <title>A recalibrated molecular clock and independent origins for the cholera pandemic clones.</title>
        <authorList>
            <person name="Feng L."/>
            <person name="Reeves P.R."/>
            <person name="Lan R."/>
            <person name="Ren Y."/>
            <person name="Gao C."/>
            <person name="Zhou Z."/>
            <person name="Ren Y."/>
            <person name="Cheng J."/>
            <person name="Wang W."/>
            <person name="Wang J."/>
            <person name="Qian W."/>
            <person name="Li D."/>
            <person name="Wang L."/>
        </authorList>
    </citation>
    <scope>NUCLEOTIDE SEQUENCE [LARGE SCALE GENOMIC DNA]</scope>
    <source>
        <strain>ATCC 39541 / Classical Ogawa 395 / O395</strain>
    </source>
</reference>
<name>Y676_VIBC3</name>
<sequence>MNIQLSPLEARVIGCLIEKEVTTPDHYPLTLNSLTTACNQKSNREPVLNLSEAEVQDTVEGLIARRLVSDESSFNSRTSKYQHRFCNTEFGDLKLNQQELGLICCLLLRGAQTPGELRTRTNRLCTFTDVKETEAVLERLANRDSGALVVKLPREPGKRESRYHHLFCGEVDMAAFATSSDNEANASSQYAELEQEVAALREEVAELRALIERHLG</sequence>
<evidence type="ECO:0000255" key="1">
    <source>
        <dbReference type="HAMAP-Rule" id="MF_01584"/>
    </source>
</evidence>
<feature type="chain" id="PRO_1000073614" description="UPF0502 protein VC0395_0676/VC395_A0574">
    <location>
        <begin position="1"/>
        <end position="216"/>
    </location>
</feature>
<proteinExistence type="inferred from homology"/>
<organism>
    <name type="scientific">Vibrio cholerae serotype O1 (strain ATCC 39541 / Classical Ogawa 395 / O395)</name>
    <dbReference type="NCBI Taxonomy" id="345073"/>
    <lineage>
        <taxon>Bacteria</taxon>
        <taxon>Pseudomonadati</taxon>
        <taxon>Pseudomonadota</taxon>
        <taxon>Gammaproteobacteria</taxon>
        <taxon>Vibrionales</taxon>
        <taxon>Vibrionaceae</taxon>
        <taxon>Vibrio</taxon>
    </lineage>
</organism>
<gene>
    <name type="ordered locus">VC0395_0676</name>
    <name type="ordered locus">VC395_A0574</name>
</gene>
<protein>
    <recommendedName>
        <fullName evidence="1">UPF0502 protein VC0395_0676/VC395_A0574</fullName>
    </recommendedName>
</protein>